<gene>
    <name evidence="1" type="primary">ligA</name>
    <name type="ordered locus">PCC8801_3418</name>
</gene>
<accession>B7K0A2</accession>
<sequence>MTIATPEIQQRVQQLRQQLQKANYAYYVLDNPIMEDSVYDQLYRELQDLESQYPILITPDSPTQRVGDQPAAQFNSIRHNIPLYSLENAFNLQELQKWEERWQRYDQVSNSDYVCELKIDGSALALTYEDGILIRGVTRGDGITGEEITQNVRTIRSIPLKLTLENPPSRVEIRGEAFLPLNEFDRLNGERKQAGEPLFANPRNAAAGTLRQLDSKVVSERRLQFFAYTLHLPEDNSLSSQWESLEWLKKMGFLVNPNCQLCPTLEAVADYFRHWETARHDLPYMTDGVVVKINDYALQNQLGFTQKFPRWAIALKYPAEEAPTRVKEIIVNVGRTGAVTPMAIMEPVHLGGTIVQRATLHNSDRVSELDIRVGDTVIIRKAGEIIPEVLRVLPELRLPNSRPYQMPSHCPECGSTLVRPVGEAVTRCVNSSCPAILRGSVVHWASRDALDIRGLGEKIVSLLVENELITSIADLYQLTPEKVAALDRMGTKSAQKLINAIEGSKRQSWPRVLYGLGIRYVGNVTAKLLTDNFPSVEVLSQASVPTLASVYGVGEEIAQSVFDWFKIVENQTLIEQLKIAGLQLENIASQAVSLTPSSGNIAGKTFVLTGTLPTLKRNEAKALIEKAGGKVTGSISSKTDYLVVGEEAGSKLAKAQELGITQLSEADLLKFLTN</sequence>
<keyword id="KW-0227">DNA damage</keyword>
<keyword id="KW-0234">DNA repair</keyword>
<keyword id="KW-0235">DNA replication</keyword>
<keyword id="KW-0436">Ligase</keyword>
<keyword id="KW-0460">Magnesium</keyword>
<keyword id="KW-0464">Manganese</keyword>
<keyword id="KW-0479">Metal-binding</keyword>
<keyword id="KW-0520">NAD</keyword>
<keyword id="KW-1185">Reference proteome</keyword>
<keyword id="KW-0862">Zinc</keyword>
<organism>
    <name type="scientific">Rippkaea orientalis (strain PCC 8801 / RF-1)</name>
    <name type="common">Cyanothece sp. (strain PCC 8801)</name>
    <dbReference type="NCBI Taxonomy" id="41431"/>
    <lineage>
        <taxon>Bacteria</taxon>
        <taxon>Bacillati</taxon>
        <taxon>Cyanobacteriota</taxon>
        <taxon>Cyanophyceae</taxon>
        <taxon>Oscillatoriophycideae</taxon>
        <taxon>Chroococcales</taxon>
        <taxon>Aphanothecaceae</taxon>
        <taxon>Rippkaea</taxon>
        <taxon>Rippkaea orientalis</taxon>
    </lineage>
</organism>
<evidence type="ECO:0000255" key="1">
    <source>
        <dbReference type="HAMAP-Rule" id="MF_01588"/>
    </source>
</evidence>
<name>DNLJ_RIPO1</name>
<feature type="chain" id="PRO_0000380356" description="DNA ligase">
    <location>
        <begin position="1"/>
        <end position="674"/>
    </location>
</feature>
<feature type="domain" description="BRCT" evidence="1">
    <location>
        <begin position="596"/>
        <end position="674"/>
    </location>
</feature>
<feature type="active site" description="N6-AMP-lysine intermediate" evidence="1">
    <location>
        <position position="118"/>
    </location>
</feature>
<feature type="binding site" evidence="1">
    <location>
        <begin position="36"/>
        <end position="40"/>
    </location>
    <ligand>
        <name>NAD(+)</name>
        <dbReference type="ChEBI" id="CHEBI:57540"/>
    </ligand>
</feature>
<feature type="binding site" evidence="1">
    <location>
        <begin position="85"/>
        <end position="86"/>
    </location>
    <ligand>
        <name>NAD(+)</name>
        <dbReference type="ChEBI" id="CHEBI:57540"/>
    </ligand>
</feature>
<feature type="binding site" evidence="1">
    <location>
        <position position="116"/>
    </location>
    <ligand>
        <name>NAD(+)</name>
        <dbReference type="ChEBI" id="CHEBI:57540"/>
    </ligand>
</feature>
<feature type="binding site" evidence="1">
    <location>
        <position position="139"/>
    </location>
    <ligand>
        <name>NAD(+)</name>
        <dbReference type="ChEBI" id="CHEBI:57540"/>
    </ligand>
</feature>
<feature type="binding site" evidence="1">
    <location>
        <position position="176"/>
    </location>
    <ligand>
        <name>NAD(+)</name>
        <dbReference type="ChEBI" id="CHEBI:57540"/>
    </ligand>
</feature>
<feature type="binding site" evidence="1">
    <location>
        <position position="292"/>
    </location>
    <ligand>
        <name>NAD(+)</name>
        <dbReference type="ChEBI" id="CHEBI:57540"/>
    </ligand>
</feature>
<feature type="binding site" evidence="1">
    <location>
        <position position="316"/>
    </location>
    <ligand>
        <name>NAD(+)</name>
        <dbReference type="ChEBI" id="CHEBI:57540"/>
    </ligand>
</feature>
<feature type="binding site" evidence="1">
    <location>
        <position position="410"/>
    </location>
    <ligand>
        <name>Zn(2+)</name>
        <dbReference type="ChEBI" id="CHEBI:29105"/>
    </ligand>
</feature>
<feature type="binding site" evidence="1">
    <location>
        <position position="413"/>
    </location>
    <ligand>
        <name>Zn(2+)</name>
        <dbReference type="ChEBI" id="CHEBI:29105"/>
    </ligand>
</feature>
<feature type="binding site" evidence="1">
    <location>
        <position position="428"/>
    </location>
    <ligand>
        <name>Zn(2+)</name>
        <dbReference type="ChEBI" id="CHEBI:29105"/>
    </ligand>
</feature>
<feature type="binding site" evidence="1">
    <location>
        <position position="433"/>
    </location>
    <ligand>
        <name>Zn(2+)</name>
        <dbReference type="ChEBI" id="CHEBI:29105"/>
    </ligand>
</feature>
<proteinExistence type="inferred from homology"/>
<comment type="function">
    <text evidence="1">DNA ligase that catalyzes the formation of phosphodiester linkages between 5'-phosphoryl and 3'-hydroxyl groups in double-stranded DNA using NAD as a coenzyme and as the energy source for the reaction. It is essential for DNA replication and repair of damaged DNA.</text>
</comment>
<comment type="catalytic activity">
    <reaction evidence="1">
        <text>NAD(+) + (deoxyribonucleotide)n-3'-hydroxyl + 5'-phospho-(deoxyribonucleotide)m = (deoxyribonucleotide)n+m + AMP + beta-nicotinamide D-nucleotide.</text>
        <dbReference type="EC" id="6.5.1.2"/>
    </reaction>
</comment>
<comment type="cofactor">
    <cofactor evidence="1">
        <name>Mg(2+)</name>
        <dbReference type="ChEBI" id="CHEBI:18420"/>
    </cofactor>
    <cofactor evidence="1">
        <name>Mn(2+)</name>
        <dbReference type="ChEBI" id="CHEBI:29035"/>
    </cofactor>
</comment>
<comment type="similarity">
    <text evidence="1">Belongs to the NAD-dependent DNA ligase family. LigA subfamily.</text>
</comment>
<dbReference type="EC" id="6.5.1.2" evidence="1"/>
<dbReference type="EMBL" id="CP001287">
    <property type="protein sequence ID" value="ACK67386.1"/>
    <property type="molecule type" value="Genomic_DNA"/>
</dbReference>
<dbReference type="RefSeq" id="WP_012596646.1">
    <property type="nucleotide sequence ID" value="NC_011726.1"/>
</dbReference>
<dbReference type="SMR" id="B7K0A2"/>
<dbReference type="STRING" id="41431.PCC8801_3418"/>
<dbReference type="KEGG" id="cyp:PCC8801_3418"/>
<dbReference type="eggNOG" id="COG0272">
    <property type="taxonomic scope" value="Bacteria"/>
</dbReference>
<dbReference type="HOGENOM" id="CLU_007764_2_1_3"/>
<dbReference type="OrthoDB" id="9759736at2"/>
<dbReference type="Proteomes" id="UP000008204">
    <property type="component" value="Chromosome"/>
</dbReference>
<dbReference type="GO" id="GO:0003677">
    <property type="term" value="F:DNA binding"/>
    <property type="evidence" value="ECO:0007669"/>
    <property type="project" value="InterPro"/>
</dbReference>
<dbReference type="GO" id="GO:0003911">
    <property type="term" value="F:DNA ligase (NAD+) activity"/>
    <property type="evidence" value="ECO:0007669"/>
    <property type="project" value="UniProtKB-UniRule"/>
</dbReference>
<dbReference type="GO" id="GO:0046872">
    <property type="term" value="F:metal ion binding"/>
    <property type="evidence" value="ECO:0007669"/>
    <property type="project" value="UniProtKB-KW"/>
</dbReference>
<dbReference type="GO" id="GO:0006281">
    <property type="term" value="P:DNA repair"/>
    <property type="evidence" value="ECO:0007669"/>
    <property type="project" value="UniProtKB-KW"/>
</dbReference>
<dbReference type="GO" id="GO:0006260">
    <property type="term" value="P:DNA replication"/>
    <property type="evidence" value="ECO:0007669"/>
    <property type="project" value="UniProtKB-KW"/>
</dbReference>
<dbReference type="CDD" id="cd17748">
    <property type="entry name" value="BRCT_DNA_ligase_like"/>
    <property type="match status" value="1"/>
</dbReference>
<dbReference type="CDD" id="cd00114">
    <property type="entry name" value="LIGANc"/>
    <property type="match status" value="1"/>
</dbReference>
<dbReference type="FunFam" id="1.10.150.20:FF:000006">
    <property type="entry name" value="DNA ligase"/>
    <property type="match status" value="1"/>
</dbReference>
<dbReference type="FunFam" id="1.10.150.20:FF:000007">
    <property type="entry name" value="DNA ligase"/>
    <property type="match status" value="1"/>
</dbReference>
<dbReference type="FunFam" id="1.10.287.610:FF:000002">
    <property type="entry name" value="DNA ligase"/>
    <property type="match status" value="1"/>
</dbReference>
<dbReference type="FunFam" id="2.40.50.140:FF:000012">
    <property type="entry name" value="DNA ligase"/>
    <property type="match status" value="1"/>
</dbReference>
<dbReference type="FunFam" id="3.30.470.30:FF:000001">
    <property type="entry name" value="DNA ligase"/>
    <property type="match status" value="1"/>
</dbReference>
<dbReference type="Gene3D" id="6.20.10.30">
    <property type="match status" value="1"/>
</dbReference>
<dbReference type="Gene3D" id="1.10.150.20">
    <property type="entry name" value="5' to 3' exonuclease, C-terminal subdomain"/>
    <property type="match status" value="2"/>
</dbReference>
<dbReference type="Gene3D" id="3.40.50.10190">
    <property type="entry name" value="BRCT domain"/>
    <property type="match status" value="1"/>
</dbReference>
<dbReference type="Gene3D" id="3.30.470.30">
    <property type="entry name" value="DNA ligase/mRNA capping enzyme"/>
    <property type="match status" value="1"/>
</dbReference>
<dbReference type="Gene3D" id="1.10.287.610">
    <property type="entry name" value="Helix hairpin bin"/>
    <property type="match status" value="1"/>
</dbReference>
<dbReference type="Gene3D" id="2.40.50.140">
    <property type="entry name" value="Nucleic acid-binding proteins"/>
    <property type="match status" value="1"/>
</dbReference>
<dbReference type="HAMAP" id="MF_01588">
    <property type="entry name" value="DNA_ligase_A"/>
    <property type="match status" value="1"/>
</dbReference>
<dbReference type="InterPro" id="IPR001357">
    <property type="entry name" value="BRCT_dom"/>
</dbReference>
<dbReference type="InterPro" id="IPR036420">
    <property type="entry name" value="BRCT_dom_sf"/>
</dbReference>
<dbReference type="InterPro" id="IPR041663">
    <property type="entry name" value="DisA/LigA_HHH"/>
</dbReference>
<dbReference type="InterPro" id="IPR001679">
    <property type="entry name" value="DNA_ligase"/>
</dbReference>
<dbReference type="InterPro" id="IPR018239">
    <property type="entry name" value="DNA_ligase_AS"/>
</dbReference>
<dbReference type="InterPro" id="IPR013839">
    <property type="entry name" value="DNAligase_adenylation"/>
</dbReference>
<dbReference type="InterPro" id="IPR013840">
    <property type="entry name" value="DNAligase_N"/>
</dbReference>
<dbReference type="InterPro" id="IPR003583">
    <property type="entry name" value="Hlx-hairpin-Hlx_DNA-bd_motif"/>
</dbReference>
<dbReference type="InterPro" id="IPR012340">
    <property type="entry name" value="NA-bd_OB-fold"/>
</dbReference>
<dbReference type="InterPro" id="IPR004150">
    <property type="entry name" value="NAD_DNA_ligase_OB"/>
</dbReference>
<dbReference type="InterPro" id="IPR010994">
    <property type="entry name" value="RuvA_2-like"/>
</dbReference>
<dbReference type="InterPro" id="IPR004149">
    <property type="entry name" value="Znf_DNAligase_C4"/>
</dbReference>
<dbReference type="NCBIfam" id="TIGR00575">
    <property type="entry name" value="dnlj"/>
    <property type="match status" value="1"/>
</dbReference>
<dbReference type="NCBIfam" id="NF005932">
    <property type="entry name" value="PRK07956.1"/>
    <property type="match status" value="1"/>
</dbReference>
<dbReference type="PANTHER" id="PTHR23389">
    <property type="entry name" value="CHROMOSOME TRANSMISSION FIDELITY FACTOR 18"/>
    <property type="match status" value="1"/>
</dbReference>
<dbReference type="PANTHER" id="PTHR23389:SF6">
    <property type="entry name" value="REPLICATION FACTOR C SUBUNIT 1"/>
    <property type="match status" value="1"/>
</dbReference>
<dbReference type="Pfam" id="PF00533">
    <property type="entry name" value="BRCT"/>
    <property type="match status" value="1"/>
</dbReference>
<dbReference type="Pfam" id="PF01653">
    <property type="entry name" value="DNA_ligase_aden"/>
    <property type="match status" value="1"/>
</dbReference>
<dbReference type="Pfam" id="PF03120">
    <property type="entry name" value="DNA_ligase_OB"/>
    <property type="match status" value="1"/>
</dbReference>
<dbReference type="Pfam" id="PF03119">
    <property type="entry name" value="DNA_ligase_ZBD"/>
    <property type="match status" value="1"/>
</dbReference>
<dbReference type="Pfam" id="PF12826">
    <property type="entry name" value="HHH_2"/>
    <property type="match status" value="1"/>
</dbReference>
<dbReference type="Pfam" id="PF14520">
    <property type="entry name" value="HHH_5"/>
    <property type="match status" value="1"/>
</dbReference>
<dbReference type="Pfam" id="PF22745">
    <property type="entry name" value="Nlig-Ia"/>
    <property type="match status" value="1"/>
</dbReference>
<dbReference type="PIRSF" id="PIRSF001604">
    <property type="entry name" value="LigA"/>
    <property type="match status" value="1"/>
</dbReference>
<dbReference type="SMART" id="SM00292">
    <property type="entry name" value="BRCT"/>
    <property type="match status" value="1"/>
</dbReference>
<dbReference type="SMART" id="SM00278">
    <property type="entry name" value="HhH1"/>
    <property type="match status" value="3"/>
</dbReference>
<dbReference type="SMART" id="SM00532">
    <property type="entry name" value="LIGANc"/>
    <property type="match status" value="1"/>
</dbReference>
<dbReference type="SUPFAM" id="SSF52113">
    <property type="entry name" value="BRCT domain"/>
    <property type="match status" value="1"/>
</dbReference>
<dbReference type="SUPFAM" id="SSF56091">
    <property type="entry name" value="DNA ligase/mRNA capping enzyme, catalytic domain"/>
    <property type="match status" value="1"/>
</dbReference>
<dbReference type="SUPFAM" id="SSF50249">
    <property type="entry name" value="Nucleic acid-binding proteins"/>
    <property type="match status" value="1"/>
</dbReference>
<dbReference type="SUPFAM" id="SSF47781">
    <property type="entry name" value="RuvA domain 2-like"/>
    <property type="match status" value="1"/>
</dbReference>
<dbReference type="PROSITE" id="PS50172">
    <property type="entry name" value="BRCT"/>
    <property type="match status" value="1"/>
</dbReference>
<dbReference type="PROSITE" id="PS01055">
    <property type="entry name" value="DNA_LIGASE_N1"/>
    <property type="match status" value="1"/>
</dbReference>
<reference key="1">
    <citation type="journal article" date="2011" name="MBio">
        <title>Novel metabolic attributes of the genus Cyanothece, comprising a group of unicellular nitrogen-fixing Cyanobacteria.</title>
        <authorList>
            <person name="Bandyopadhyay A."/>
            <person name="Elvitigala T."/>
            <person name="Welsh E."/>
            <person name="Stockel J."/>
            <person name="Liberton M."/>
            <person name="Min H."/>
            <person name="Sherman L.A."/>
            <person name="Pakrasi H.B."/>
        </authorList>
    </citation>
    <scope>NUCLEOTIDE SEQUENCE [LARGE SCALE GENOMIC DNA]</scope>
    <source>
        <strain>PCC 8801 / RF-1</strain>
    </source>
</reference>
<protein>
    <recommendedName>
        <fullName evidence="1">DNA ligase</fullName>
        <ecNumber evidence="1">6.5.1.2</ecNumber>
    </recommendedName>
    <alternativeName>
        <fullName evidence="1">Polydeoxyribonucleotide synthase [NAD(+)]</fullName>
    </alternativeName>
</protein>